<evidence type="ECO:0000255" key="1">
    <source>
        <dbReference type="HAMAP-Rule" id="MF_01331"/>
    </source>
</evidence>
<evidence type="ECO:0000305" key="2"/>
<protein>
    <recommendedName>
        <fullName evidence="1">Large ribosomal subunit protein uL22</fullName>
    </recommendedName>
    <alternativeName>
        <fullName evidence="2">50S ribosomal protein L22</fullName>
    </alternativeName>
</protein>
<reference key="1">
    <citation type="submission" date="2006-12" db="EMBL/GenBank/DDBJ databases">
        <title>Complete sequence of chromosome 1 of Verminephrobacter eiseniae EF01-2.</title>
        <authorList>
            <person name="Copeland A."/>
            <person name="Lucas S."/>
            <person name="Lapidus A."/>
            <person name="Barry K."/>
            <person name="Detter J.C."/>
            <person name="Glavina del Rio T."/>
            <person name="Dalin E."/>
            <person name="Tice H."/>
            <person name="Pitluck S."/>
            <person name="Chertkov O."/>
            <person name="Brettin T."/>
            <person name="Bruce D."/>
            <person name="Han C."/>
            <person name="Tapia R."/>
            <person name="Gilna P."/>
            <person name="Schmutz J."/>
            <person name="Larimer F."/>
            <person name="Land M."/>
            <person name="Hauser L."/>
            <person name="Kyrpides N."/>
            <person name="Kim E."/>
            <person name="Stahl D."/>
            <person name="Richardson P."/>
        </authorList>
    </citation>
    <scope>NUCLEOTIDE SEQUENCE [LARGE SCALE GENOMIC DNA]</scope>
    <source>
        <strain>EF01-2</strain>
    </source>
</reference>
<sequence length="110" mass="12007">MPETHAILRGVRLSVDKGRLVADLIRGKKVDQALNILNFTQKKAAGIIRKVLESAIANAEHNDSADIDELKVKTIHVEQGTTLKRSAARAKGRGNRISKPTCHVYVTVGN</sequence>
<name>RL22_VEREI</name>
<gene>
    <name evidence="1" type="primary">rplV</name>
    <name type="ordered locus">Veis_1269</name>
</gene>
<comment type="function">
    <text evidence="1">This protein binds specifically to 23S rRNA; its binding is stimulated by other ribosomal proteins, e.g. L4, L17, and L20. It is important during the early stages of 50S assembly. It makes multiple contacts with different domains of the 23S rRNA in the assembled 50S subunit and ribosome (By similarity).</text>
</comment>
<comment type="function">
    <text evidence="1">The globular domain of the protein is located near the polypeptide exit tunnel on the outside of the subunit, while an extended beta-hairpin is found that lines the wall of the exit tunnel in the center of the 70S ribosome.</text>
</comment>
<comment type="subunit">
    <text evidence="1">Part of the 50S ribosomal subunit.</text>
</comment>
<comment type="similarity">
    <text evidence="1">Belongs to the universal ribosomal protein uL22 family.</text>
</comment>
<accession>A1WHD0</accession>
<keyword id="KW-1185">Reference proteome</keyword>
<keyword id="KW-0687">Ribonucleoprotein</keyword>
<keyword id="KW-0689">Ribosomal protein</keyword>
<keyword id="KW-0694">RNA-binding</keyword>
<keyword id="KW-0699">rRNA-binding</keyword>
<organism>
    <name type="scientific">Verminephrobacter eiseniae (strain EF01-2)</name>
    <dbReference type="NCBI Taxonomy" id="391735"/>
    <lineage>
        <taxon>Bacteria</taxon>
        <taxon>Pseudomonadati</taxon>
        <taxon>Pseudomonadota</taxon>
        <taxon>Betaproteobacteria</taxon>
        <taxon>Burkholderiales</taxon>
        <taxon>Comamonadaceae</taxon>
        <taxon>Verminephrobacter</taxon>
    </lineage>
</organism>
<dbReference type="EMBL" id="CP000542">
    <property type="protein sequence ID" value="ABM57037.1"/>
    <property type="molecule type" value="Genomic_DNA"/>
</dbReference>
<dbReference type="RefSeq" id="WP_011809047.1">
    <property type="nucleotide sequence ID" value="NC_008786.1"/>
</dbReference>
<dbReference type="SMR" id="A1WHD0"/>
<dbReference type="STRING" id="391735.Veis_1269"/>
<dbReference type="GeneID" id="76459916"/>
<dbReference type="KEGG" id="vei:Veis_1269"/>
<dbReference type="eggNOG" id="COG0091">
    <property type="taxonomic scope" value="Bacteria"/>
</dbReference>
<dbReference type="HOGENOM" id="CLU_083987_3_3_4"/>
<dbReference type="OrthoDB" id="9805969at2"/>
<dbReference type="Proteomes" id="UP000000374">
    <property type="component" value="Chromosome"/>
</dbReference>
<dbReference type="GO" id="GO:0022625">
    <property type="term" value="C:cytosolic large ribosomal subunit"/>
    <property type="evidence" value="ECO:0007669"/>
    <property type="project" value="TreeGrafter"/>
</dbReference>
<dbReference type="GO" id="GO:0019843">
    <property type="term" value="F:rRNA binding"/>
    <property type="evidence" value="ECO:0007669"/>
    <property type="project" value="UniProtKB-UniRule"/>
</dbReference>
<dbReference type="GO" id="GO:0003735">
    <property type="term" value="F:structural constituent of ribosome"/>
    <property type="evidence" value="ECO:0007669"/>
    <property type="project" value="InterPro"/>
</dbReference>
<dbReference type="GO" id="GO:0006412">
    <property type="term" value="P:translation"/>
    <property type="evidence" value="ECO:0007669"/>
    <property type="project" value="UniProtKB-UniRule"/>
</dbReference>
<dbReference type="CDD" id="cd00336">
    <property type="entry name" value="Ribosomal_L22"/>
    <property type="match status" value="1"/>
</dbReference>
<dbReference type="Gene3D" id="3.90.470.10">
    <property type="entry name" value="Ribosomal protein L22/L17"/>
    <property type="match status" value="1"/>
</dbReference>
<dbReference type="HAMAP" id="MF_01331_B">
    <property type="entry name" value="Ribosomal_uL22_B"/>
    <property type="match status" value="1"/>
</dbReference>
<dbReference type="InterPro" id="IPR001063">
    <property type="entry name" value="Ribosomal_uL22"/>
</dbReference>
<dbReference type="InterPro" id="IPR005727">
    <property type="entry name" value="Ribosomal_uL22_bac/chlpt-type"/>
</dbReference>
<dbReference type="InterPro" id="IPR047867">
    <property type="entry name" value="Ribosomal_uL22_bac/org-type"/>
</dbReference>
<dbReference type="InterPro" id="IPR018260">
    <property type="entry name" value="Ribosomal_uL22_CS"/>
</dbReference>
<dbReference type="InterPro" id="IPR036394">
    <property type="entry name" value="Ribosomal_uL22_sf"/>
</dbReference>
<dbReference type="NCBIfam" id="TIGR01044">
    <property type="entry name" value="rplV_bact"/>
    <property type="match status" value="1"/>
</dbReference>
<dbReference type="PANTHER" id="PTHR13501">
    <property type="entry name" value="CHLOROPLAST 50S RIBOSOMAL PROTEIN L22-RELATED"/>
    <property type="match status" value="1"/>
</dbReference>
<dbReference type="PANTHER" id="PTHR13501:SF8">
    <property type="entry name" value="LARGE RIBOSOMAL SUBUNIT PROTEIN UL22M"/>
    <property type="match status" value="1"/>
</dbReference>
<dbReference type="Pfam" id="PF00237">
    <property type="entry name" value="Ribosomal_L22"/>
    <property type="match status" value="1"/>
</dbReference>
<dbReference type="SUPFAM" id="SSF54843">
    <property type="entry name" value="Ribosomal protein L22"/>
    <property type="match status" value="1"/>
</dbReference>
<dbReference type="PROSITE" id="PS00464">
    <property type="entry name" value="RIBOSOMAL_L22"/>
    <property type="match status" value="1"/>
</dbReference>
<feature type="chain" id="PRO_0000354533" description="Large ribosomal subunit protein uL22">
    <location>
        <begin position="1"/>
        <end position="110"/>
    </location>
</feature>
<proteinExistence type="inferred from homology"/>